<feature type="chain" id="PRO_1000040612" description="3,4-dihydroxy-2-butanone 4-phosphate synthase">
    <location>
        <begin position="1"/>
        <end position="215"/>
    </location>
</feature>
<feature type="binding site" evidence="1">
    <location>
        <begin position="38"/>
        <end position="39"/>
    </location>
    <ligand>
        <name>D-ribulose 5-phosphate</name>
        <dbReference type="ChEBI" id="CHEBI:58121"/>
    </ligand>
</feature>
<feature type="binding site" evidence="1">
    <location>
        <position position="39"/>
    </location>
    <ligand>
        <name>Mg(2+)</name>
        <dbReference type="ChEBI" id="CHEBI:18420"/>
        <label>1</label>
    </ligand>
</feature>
<feature type="binding site" evidence="1">
    <location>
        <position position="39"/>
    </location>
    <ligand>
        <name>Mg(2+)</name>
        <dbReference type="ChEBI" id="CHEBI:18420"/>
        <label>2</label>
    </ligand>
</feature>
<feature type="binding site" evidence="1">
    <location>
        <position position="43"/>
    </location>
    <ligand>
        <name>D-ribulose 5-phosphate</name>
        <dbReference type="ChEBI" id="CHEBI:58121"/>
    </ligand>
</feature>
<feature type="binding site" evidence="1">
    <location>
        <begin position="151"/>
        <end position="155"/>
    </location>
    <ligand>
        <name>D-ribulose 5-phosphate</name>
        <dbReference type="ChEBI" id="CHEBI:58121"/>
    </ligand>
</feature>
<feature type="binding site" evidence="1">
    <location>
        <position position="154"/>
    </location>
    <ligand>
        <name>Mg(2+)</name>
        <dbReference type="ChEBI" id="CHEBI:18420"/>
        <label>2</label>
    </ligand>
</feature>
<feature type="binding site" evidence="1">
    <location>
        <position position="175"/>
    </location>
    <ligand>
        <name>D-ribulose 5-phosphate</name>
        <dbReference type="ChEBI" id="CHEBI:58121"/>
    </ligand>
</feature>
<feature type="site" description="Essential for catalytic activity" evidence="1">
    <location>
        <position position="137"/>
    </location>
</feature>
<feature type="site" description="Essential for catalytic activity" evidence="1">
    <location>
        <position position="175"/>
    </location>
</feature>
<reference key="1">
    <citation type="journal article" date="2007" name="Genome Biol.">
        <title>Characterization and modeling of the Haemophilus influenzae core and supragenomes based on the complete genomic sequences of Rd and 12 clinical nontypeable strains.</title>
        <authorList>
            <person name="Hogg J.S."/>
            <person name="Hu F.Z."/>
            <person name="Janto B."/>
            <person name="Boissy R."/>
            <person name="Hayes J."/>
            <person name="Keefe R."/>
            <person name="Post J.C."/>
            <person name="Ehrlich G.D."/>
        </authorList>
    </citation>
    <scope>NUCLEOTIDE SEQUENCE [LARGE SCALE GENOMIC DNA]</scope>
    <source>
        <strain>PittGG</strain>
    </source>
</reference>
<name>RIBB_HAEIG</name>
<gene>
    <name evidence="1" type="primary">ribB</name>
    <name type="ordered locus">CGSHiGG_07315</name>
</gene>
<accession>A5UHR8</accession>
<dbReference type="EC" id="4.1.99.12" evidence="1"/>
<dbReference type="EMBL" id="CP000672">
    <property type="protein sequence ID" value="ABR00324.1"/>
    <property type="molecule type" value="Genomic_DNA"/>
</dbReference>
<dbReference type="SMR" id="A5UHR8"/>
<dbReference type="KEGG" id="hiq:CGSHiGG_07315"/>
<dbReference type="HOGENOM" id="CLU_020273_3_0_6"/>
<dbReference type="UniPathway" id="UPA00275">
    <property type="reaction ID" value="UER00399"/>
</dbReference>
<dbReference type="Proteomes" id="UP000001990">
    <property type="component" value="Chromosome"/>
</dbReference>
<dbReference type="GO" id="GO:0005829">
    <property type="term" value="C:cytosol"/>
    <property type="evidence" value="ECO:0007669"/>
    <property type="project" value="TreeGrafter"/>
</dbReference>
<dbReference type="GO" id="GO:0008686">
    <property type="term" value="F:3,4-dihydroxy-2-butanone-4-phosphate synthase activity"/>
    <property type="evidence" value="ECO:0007669"/>
    <property type="project" value="UniProtKB-UniRule"/>
</dbReference>
<dbReference type="GO" id="GO:0000287">
    <property type="term" value="F:magnesium ion binding"/>
    <property type="evidence" value="ECO:0007669"/>
    <property type="project" value="UniProtKB-UniRule"/>
</dbReference>
<dbReference type="GO" id="GO:0030145">
    <property type="term" value="F:manganese ion binding"/>
    <property type="evidence" value="ECO:0007669"/>
    <property type="project" value="UniProtKB-UniRule"/>
</dbReference>
<dbReference type="GO" id="GO:0009231">
    <property type="term" value="P:riboflavin biosynthetic process"/>
    <property type="evidence" value="ECO:0007669"/>
    <property type="project" value="UniProtKB-UniRule"/>
</dbReference>
<dbReference type="FunFam" id="3.90.870.10:FF:000002">
    <property type="entry name" value="3,4-dihydroxy-2-butanone 4-phosphate synthase"/>
    <property type="match status" value="1"/>
</dbReference>
<dbReference type="Gene3D" id="3.90.870.10">
    <property type="entry name" value="DHBP synthase"/>
    <property type="match status" value="1"/>
</dbReference>
<dbReference type="HAMAP" id="MF_00180">
    <property type="entry name" value="RibB"/>
    <property type="match status" value="1"/>
</dbReference>
<dbReference type="InterPro" id="IPR017945">
    <property type="entry name" value="DHBP_synth_RibB-like_a/b_dom"/>
</dbReference>
<dbReference type="InterPro" id="IPR000422">
    <property type="entry name" value="DHBP_synthase_RibB"/>
</dbReference>
<dbReference type="NCBIfam" id="TIGR00506">
    <property type="entry name" value="ribB"/>
    <property type="match status" value="1"/>
</dbReference>
<dbReference type="PANTHER" id="PTHR21327:SF38">
    <property type="entry name" value="3,4-DIHYDROXY-2-BUTANONE 4-PHOSPHATE SYNTHASE"/>
    <property type="match status" value="1"/>
</dbReference>
<dbReference type="PANTHER" id="PTHR21327">
    <property type="entry name" value="GTP CYCLOHYDROLASE II-RELATED"/>
    <property type="match status" value="1"/>
</dbReference>
<dbReference type="Pfam" id="PF00926">
    <property type="entry name" value="DHBP_synthase"/>
    <property type="match status" value="1"/>
</dbReference>
<dbReference type="SUPFAM" id="SSF55821">
    <property type="entry name" value="YrdC/RibB"/>
    <property type="match status" value="1"/>
</dbReference>
<evidence type="ECO:0000255" key="1">
    <source>
        <dbReference type="HAMAP-Rule" id="MF_00180"/>
    </source>
</evidence>
<comment type="function">
    <text evidence="1">Catalyzes the conversion of D-ribulose 5-phosphate to formate and 3,4-dihydroxy-2-butanone 4-phosphate.</text>
</comment>
<comment type="catalytic activity">
    <reaction evidence="1">
        <text>D-ribulose 5-phosphate = (2S)-2-hydroxy-3-oxobutyl phosphate + formate + H(+)</text>
        <dbReference type="Rhea" id="RHEA:18457"/>
        <dbReference type="ChEBI" id="CHEBI:15378"/>
        <dbReference type="ChEBI" id="CHEBI:15740"/>
        <dbReference type="ChEBI" id="CHEBI:58121"/>
        <dbReference type="ChEBI" id="CHEBI:58830"/>
        <dbReference type="EC" id="4.1.99.12"/>
    </reaction>
</comment>
<comment type="cofactor">
    <cofactor evidence="1">
        <name>Mg(2+)</name>
        <dbReference type="ChEBI" id="CHEBI:18420"/>
    </cofactor>
    <cofactor evidence="1">
        <name>Mn(2+)</name>
        <dbReference type="ChEBI" id="CHEBI:29035"/>
    </cofactor>
    <text evidence="1">Binds 2 divalent metal cations per subunit. Magnesium or manganese.</text>
</comment>
<comment type="pathway">
    <text evidence="1">Cofactor biosynthesis; riboflavin biosynthesis; 2-hydroxy-3-oxobutyl phosphate from D-ribulose 5-phosphate: step 1/1.</text>
</comment>
<comment type="subunit">
    <text evidence="1">Homodimer.</text>
</comment>
<comment type="similarity">
    <text evidence="1">Belongs to the DHBP synthase family.</text>
</comment>
<organism>
    <name type="scientific">Haemophilus influenzae (strain PittGG)</name>
    <dbReference type="NCBI Taxonomy" id="374931"/>
    <lineage>
        <taxon>Bacteria</taxon>
        <taxon>Pseudomonadati</taxon>
        <taxon>Pseudomonadota</taxon>
        <taxon>Gammaproteobacteria</taxon>
        <taxon>Pasteurellales</taxon>
        <taxon>Pasteurellaceae</taxon>
        <taxon>Haemophilus</taxon>
    </lineage>
</organism>
<protein>
    <recommendedName>
        <fullName evidence="1">3,4-dihydroxy-2-butanone 4-phosphate synthase</fullName>
        <shortName evidence="1">DHBP synthase</shortName>
        <ecNumber evidence="1">4.1.99.12</ecNumber>
    </recommendedName>
</protein>
<keyword id="KW-0456">Lyase</keyword>
<keyword id="KW-0460">Magnesium</keyword>
<keyword id="KW-0464">Manganese</keyword>
<keyword id="KW-0479">Metal-binding</keyword>
<keyword id="KW-0686">Riboflavin biosynthesis</keyword>
<proteinExistence type="inferred from homology"/>
<sequence length="215" mass="23249">MNQSILSPFGNTAEERVLNAINAFKNGTGVLVLDDEDRENEGDLIFPAETITPEQMAKLIRYGSGIVCLCITDERCQQLDLPSMVEHNNSVNKTAFTVTIEAAKGVSTGVSAADRVTTIQTAIADNAVPTDLHRPGHVFPLRAVNGGVLTRRGHTEASVDLARLAGFKEAGVICEITNDDGTMARTPDIVEFAKKFGYSVLTIEDLVEYRLANNI</sequence>